<organism>
    <name type="scientific">Amborella trichopoda</name>
    <dbReference type="NCBI Taxonomy" id="13333"/>
    <lineage>
        <taxon>Eukaryota</taxon>
        <taxon>Viridiplantae</taxon>
        <taxon>Streptophyta</taxon>
        <taxon>Embryophyta</taxon>
        <taxon>Tracheophyta</taxon>
        <taxon>Spermatophyta</taxon>
        <taxon>Magnoliopsida</taxon>
        <taxon>Amborellales</taxon>
        <taxon>Amborellaceae</taxon>
        <taxon>Amborella</taxon>
    </lineage>
</organism>
<comment type="catalytic activity">
    <reaction evidence="1">
        <text>a plastoquinone + NADH + (n+1) H(+)(in) = a plastoquinol + NAD(+) + n H(+)(out)</text>
        <dbReference type="Rhea" id="RHEA:42608"/>
        <dbReference type="Rhea" id="RHEA-COMP:9561"/>
        <dbReference type="Rhea" id="RHEA-COMP:9562"/>
        <dbReference type="ChEBI" id="CHEBI:15378"/>
        <dbReference type="ChEBI" id="CHEBI:17757"/>
        <dbReference type="ChEBI" id="CHEBI:57540"/>
        <dbReference type="ChEBI" id="CHEBI:57945"/>
        <dbReference type="ChEBI" id="CHEBI:62192"/>
    </reaction>
</comment>
<comment type="catalytic activity">
    <reaction evidence="1">
        <text>a plastoquinone + NADPH + (n+1) H(+)(in) = a plastoquinol + NADP(+) + n H(+)(out)</text>
        <dbReference type="Rhea" id="RHEA:42612"/>
        <dbReference type="Rhea" id="RHEA-COMP:9561"/>
        <dbReference type="Rhea" id="RHEA-COMP:9562"/>
        <dbReference type="ChEBI" id="CHEBI:15378"/>
        <dbReference type="ChEBI" id="CHEBI:17757"/>
        <dbReference type="ChEBI" id="CHEBI:57783"/>
        <dbReference type="ChEBI" id="CHEBI:58349"/>
        <dbReference type="ChEBI" id="CHEBI:62192"/>
    </reaction>
</comment>
<comment type="subcellular location">
    <subcellularLocation>
        <location evidence="1">Plastid</location>
        <location evidence="1">Chloroplast thylakoid membrane</location>
        <topology evidence="1">Multi-pass membrane protein</topology>
    </subcellularLocation>
</comment>
<comment type="similarity">
    <text evidence="1">Belongs to the complex I subunit 4 family.</text>
</comment>
<protein>
    <recommendedName>
        <fullName evidence="1">NAD(P)H-quinone oxidoreductase chain 4, chloroplastic</fullName>
        <ecNumber evidence="1">7.1.1.-</ecNumber>
    </recommendedName>
    <alternativeName>
        <fullName evidence="1">NAD(P)H dehydrogenase, chain 4</fullName>
    </alternativeName>
    <alternativeName>
        <fullName evidence="1">NADH-plastoquinone oxidoreductase chain 4</fullName>
    </alternativeName>
</protein>
<proteinExistence type="inferred from homology"/>
<geneLocation type="chloroplast"/>
<feature type="chain" id="PRO_0000118009" description="NAD(P)H-quinone oxidoreductase chain 4, chloroplastic">
    <location>
        <begin position="1"/>
        <end position="500"/>
    </location>
</feature>
<feature type="transmembrane region" description="Helical" evidence="1">
    <location>
        <begin position="4"/>
        <end position="24"/>
    </location>
</feature>
<feature type="transmembrane region" description="Helical" evidence="1">
    <location>
        <begin position="37"/>
        <end position="57"/>
    </location>
</feature>
<feature type="transmembrane region" description="Helical" evidence="1">
    <location>
        <begin position="80"/>
        <end position="100"/>
    </location>
</feature>
<feature type="transmembrane region" description="Helical" evidence="1">
    <location>
        <begin position="134"/>
        <end position="154"/>
    </location>
</feature>
<feature type="transmembrane region" description="Helical" evidence="1">
    <location>
        <begin position="167"/>
        <end position="187"/>
    </location>
</feature>
<feature type="transmembrane region" description="Helical" evidence="1">
    <location>
        <begin position="208"/>
        <end position="228"/>
    </location>
</feature>
<feature type="transmembrane region" description="Helical" evidence="1">
    <location>
        <begin position="242"/>
        <end position="262"/>
    </location>
</feature>
<feature type="transmembrane region" description="Helical" evidence="1">
    <location>
        <begin position="272"/>
        <end position="292"/>
    </location>
</feature>
<feature type="transmembrane region" description="Helical" evidence="1">
    <location>
        <begin position="330"/>
        <end position="350"/>
    </location>
</feature>
<feature type="transmembrane region" description="Helical" evidence="1">
    <location>
        <begin position="386"/>
        <end position="406"/>
    </location>
</feature>
<feature type="transmembrane region" description="Helical" evidence="1">
    <location>
        <begin position="416"/>
        <end position="436"/>
    </location>
</feature>
<feature type="transmembrane region" description="Helical" evidence="1">
    <location>
        <begin position="462"/>
        <end position="482"/>
    </location>
</feature>
<sequence length="500" mass="55803">MNNFPWLTAILLLPISAGSSILFIPQRGNKAVRWYTICICLLELLLMTYVFYYNFQLDDPLIQLEEDCNWINLFDFHWRLGIDGLSIGPILLTGFITTLATSAAWPVTRNSRLFHFLMLAMYSGQIGSFSSRDLLLFFIMWELELIPVYLLLSMWGGKKRLYSATKFILYTAGGSIFLLIGVLGMGLYSSNQPMLNFETSANQSYPVGLEILFYFGFLIAYAAKPPIIPLHTWLPDTHGEAHYSTCMLLAGILLKMGAYGLVRINMELLPHAHSLFSPWLVIVGTLQIIYAASTSLGQRNLKKRIAYSSVSHMGSTIIGIGSMTDTALNGAILQIISHGFIGAALFFLAGTSYDRIRFLYLDEMGGIAIPMPKIFTMFSIFSMASLASPGMSGFVAEFLVFLGIITSPKYLFIPKILITVVMAIGMILTPIYLLSMSRQMFYGYKLFNVPNSYFVDSGPREIFILISILLPVMGIGIYPDFVLSLSVDKVEAILANYFNG</sequence>
<reference key="1">
    <citation type="journal article" date="2003" name="Mol. Biol. Evol.">
        <title>Analysis of the Amborella trichopoda chloroplast genome sequence suggests that Amborella is not a basal angiosperm.</title>
        <authorList>
            <person name="Goremykin V.V."/>
            <person name="Hirsch-Ernst K.I."/>
            <person name="Wolfl S."/>
            <person name="Hellwig F.H."/>
        </authorList>
    </citation>
    <scope>NUCLEOTIDE SEQUENCE [LARGE SCALE GENOMIC DNA]</scope>
</reference>
<accession>Q70XV2</accession>
<dbReference type="EC" id="7.1.1.-" evidence="1"/>
<dbReference type="EMBL" id="AJ506156">
    <property type="protein sequence ID" value="CAD47815.3"/>
    <property type="molecule type" value="Genomic_DNA"/>
</dbReference>
<dbReference type="RefSeq" id="NP_904149.1">
    <property type="nucleotide sequence ID" value="NC_005086.1"/>
</dbReference>
<dbReference type="SMR" id="Q70XV2"/>
<dbReference type="STRING" id="13333.Q70XV2"/>
<dbReference type="GeneID" id="2546602"/>
<dbReference type="KEGG" id="atr:2546602"/>
<dbReference type="OrthoDB" id="564260at2759"/>
<dbReference type="Proteomes" id="UP000017836">
    <property type="component" value="Chloroplast"/>
</dbReference>
<dbReference type="GO" id="GO:0009535">
    <property type="term" value="C:chloroplast thylakoid membrane"/>
    <property type="evidence" value="ECO:0007669"/>
    <property type="project" value="UniProtKB-SubCell"/>
</dbReference>
<dbReference type="GO" id="GO:0008137">
    <property type="term" value="F:NADH dehydrogenase (ubiquinone) activity"/>
    <property type="evidence" value="ECO:0007669"/>
    <property type="project" value="InterPro"/>
</dbReference>
<dbReference type="GO" id="GO:0048039">
    <property type="term" value="F:ubiquinone binding"/>
    <property type="evidence" value="ECO:0000318"/>
    <property type="project" value="GO_Central"/>
</dbReference>
<dbReference type="GO" id="GO:0009060">
    <property type="term" value="P:aerobic respiration"/>
    <property type="evidence" value="ECO:0000318"/>
    <property type="project" value="GO_Central"/>
</dbReference>
<dbReference type="GO" id="GO:0042773">
    <property type="term" value="P:ATP synthesis coupled electron transport"/>
    <property type="evidence" value="ECO:0007669"/>
    <property type="project" value="InterPro"/>
</dbReference>
<dbReference type="GO" id="GO:0015990">
    <property type="term" value="P:electron transport coupled proton transport"/>
    <property type="evidence" value="ECO:0000318"/>
    <property type="project" value="GO_Central"/>
</dbReference>
<dbReference type="HAMAP" id="MF_00491">
    <property type="entry name" value="NDH1_NuoM"/>
    <property type="match status" value="1"/>
</dbReference>
<dbReference type="InterPro" id="IPR022997">
    <property type="entry name" value="NADH_Q_OxRdtase_chain4"/>
</dbReference>
<dbReference type="InterPro" id="IPR010227">
    <property type="entry name" value="NADH_Q_OxRdtase_chainM/4"/>
</dbReference>
<dbReference type="InterPro" id="IPR003918">
    <property type="entry name" value="NADH_UbQ_OxRdtase"/>
</dbReference>
<dbReference type="InterPro" id="IPR001750">
    <property type="entry name" value="ND/Mrp_TM"/>
</dbReference>
<dbReference type="NCBIfam" id="TIGR01972">
    <property type="entry name" value="NDH_I_M"/>
    <property type="match status" value="1"/>
</dbReference>
<dbReference type="PANTHER" id="PTHR43507:SF21">
    <property type="entry name" value="NAD(P)H-QUINONE OXIDOREDUCTASE CHAIN 4, CHLOROPLASTIC"/>
    <property type="match status" value="1"/>
</dbReference>
<dbReference type="PANTHER" id="PTHR43507">
    <property type="entry name" value="NADH-UBIQUINONE OXIDOREDUCTASE CHAIN 4"/>
    <property type="match status" value="1"/>
</dbReference>
<dbReference type="Pfam" id="PF00361">
    <property type="entry name" value="Proton_antipo_M"/>
    <property type="match status" value="1"/>
</dbReference>
<dbReference type="PRINTS" id="PR01437">
    <property type="entry name" value="NUOXDRDTASE4"/>
</dbReference>
<evidence type="ECO:0000255" key="1">
    <source>
        <dbReference type="HAMAP-Rule" id="MF_00491"/>
    </source>
</evidence>
<name>NU4C_AMBTC</name>
<gene>
    <name evidence="1" type="primary">ndhD</name>
</gene>
<keyword id="KW-0150">Chloroplast</keyword>
<keyword id="KW-0472">Membrane</keyword>
<keyword id="KW-0520">NAD</keyword>
<keyword id="KW-0521">NADP</keyword>
<keyword id="KW-0934">Plastid</keyword>
<keyword id="KW-0618">Plastoquinone</keyword>
<keyword id="KW-0874">Quinone</keyword>
<keyword id="KW-1185">Reference proteome</keyword>
<keyword id="KW-0793">Thylakoid</keyword>
<keyword id="KW-1278">Translocase</keyword>
<keyword id="KW-0812">Transmembrane</keyword>
<keyword id="KW-1133">Transmembrane helix</keyword>